<name>METE_RHILO</name>
<organism>
    <name type="scientific">Mesorhizobium japonicum (strain LMG 29417 / CECT 9101 / MAFF 303099)</name>
    <name type="common">Mesorhizobium loti (strain MAFF 303099)</name>
    <dbReference type="NCBI Taxonomy" id="266835"/>
    <lineage>
        <taxon>Bacteria</taxon>
        <taxon>Pseudomonadati</taxon>
        <taxon>Pseudomonadota</taxon>
        <taxon>Alphaproteobacteria</taxon>
        <taxon>Hyphomicrobiales</taxon>
        <taxon>Phyllobacteriaceae</taxon>
        <taxon>Mesorhizobium</taxon>
    </lineage>
</organism>
<protein>
    <recommendedName>
        <fullName evidence="1">5-methyltetrahydropteroyltriglutamate--homocysteine methyltransferase</fullName>
        <ecNumber evidence="1">2.1.1.14</ecNumber>
    </recommendedName>
    <alternativeName>
        <fullName evidence="1">Cobalamin-independent methionine synthase</fullName>
    </alternativeName>
    <alternativeName>
        <fullName evidence="1">Methionine synthase, vitamin-B12 independent isozyme</fullName>
    </alternativeName>
</protein>
<sequence length="776" mass="85819">MATLGVPRIGRRRELKFALESYWSGKSPAADLLATAKALRAASWREQHDRGVSKIPSNDFSLYDHVLDTVAMVGAVPARYTWTDGEVPLDTYFAMARGNQDQAADCGHAGDEHAANGHGLAAMEMTKWFDTNYHYIVPELTDDQSFALSSAKPVDHFLEAKALGIHTRPVLLGPVTFLKLAKSPEEGFNPIALLPRLLPVYEELLRRLKLAGADWVQIDEPALVVDLVPNERDALQFAYCRLSKAAPELKIMVAIYFGSLGDNLETAISLPVAGLHVDLVRAPEQLETVGRLAQKDLVLSLGLIDGRNVWRANLPAILDRIKPIVAGWPLDRVEIAPSCSMLHVPIDLDMETALDADVKSWLAFAAQKTDELVVLARALAEGRDAVAAELEASAEAAAARATSAKVHDPLVEGRVASIKVAMTRRKSAFDVRSKLQGDTFGLPSFPTTTIGSFPQTAEVRKARAAHAKGELSYVDYEAFLKKEIEAAVRWQEEIGLDVLVHGEFERNDMVQYFAEQLRGFAFTQHGWVQSYGSRFVRPPIIIGDVSRQNPMTLHWWRYAQSLTPKPVKGMLTGPVTILNWSFVRDDLPRSAVCRQVALAIRDEVSDLEKAGAKMIQIDEAALREGLPLREADWQAYLDWAVECFRLASTAVGDATQIHTHMCYSEFGDIVDAIAAMDADVISIETSRSQLELLDTLRTFKYPNEIGPGVYDIHSPRVPEVGEISNLIMLARKRLSDGQLWVNPDCGLKTRRWEEVRPALVNMVAAARAIRQKAQTA</sequence>
<keyword id="KW-0028">Amino-acid biosynthesis</keyword>
<keyword id="KW-0479">Metal-binding</keyword>
<keyword id="KW-0486">Methionine biosynthesis</keyword>
<keyword id="KW-0489">Methyltransferase</keyword>
<keyword id="KW-0677">Repeat</keyword>
<keyword id="KW-0808">Transferase</keyword>
<keyword id="KW-0862">Zinc</keyword>
<proteinExistence type="inferred from homology"/>
<dbReference type="EC" id="2.1.1.14" evidence="1"/>
<dbReference type="EMBL" id="BA000012">
    <property type="protein sequence ID" value="BAB52464.1"/>
    <property type="molecule type" value="Genomic_DNA"/>
</dbReference>
<dbReference type="RefSeq" id="WP_010913785.1">
    <property type="nucleotide sequence ID" value="NC_002678.2"/>
</dbReference>
<dbReference type="SMR" id="Q98A73"/>
<dbReference type="KEGG" id="mlo:mll6123"/>
<dbReference type="PATRIC" id="fig|266835.9.peg.4878"/>
<dbReference type="eggNOG" id="COG0620">
    <property type="taxonomic scope" value="Bacteria"/>
</dbReference>
<dbReference type="HOGENOM" id="CLU_013175_0_0_5"/>
<dbReference type="UniPathway" id="UPA00051">
    <property type="reaction ID" value="UER00082"/>
</dbReference>
<dbReference type="Proteomes" id="UP000000552">
    <property type="component" value="Chromosome"/>
</dbReference>
<dbReference type="GO" id="GO:0003871">
    <property type="term" value="F:5-methyltetrahydropteroyltriglutamate-homocysteine S-methyltransferase activity"/>
    <property type="evidence" value="ECO:0007669"/>
    <property type="project" value="UniProtKB-UniRule"/>
</dbReference>
<dbReference type="GO" id="GO:0008270">
    <property type="term" value="F:zinc ion binding"/>
    <property type="evidence" value="ECO:0007669"/>
    <property type="project" value="InterPro"/>
</dbReference>
<dbReference type="GO" id="GO:0009086">
    <property type="term" value="P:methionine biosynthetic process"/>
    <property type="evidence" value="ECO:0007669"/>
    <property type="project" value="UniProtKB-UniRule"/>
</dbReference>
<dbReference type="GO" id="GO:0032259">
    <property type="term" value="P:methylation"/>
    <property type="evidence" value="ECO:0007669"/>
    <property type="project" value="UniProtKB-KW"/>
</dbReference>
<dbReference type="CDD" id="cd03311">
    <property type="entry name" value="CIMS_C_terminal_like"/>
    <property type="match status" value="1"/>
</dbReference>
<dbReference type="CDD" id="cd03312">
    <property type="entry name" value="CIMS_N_terminal_like"/>
    <property type="match status" value="1"/>
</dbReference>
<dbReference type="FunFam" id="3.20.20.210:FF:000003">
    <property type="entry name" value="5-methyltetrahydropteroyltriglutamate--homocysteine methyltransferase"/>
    <property type="match status" value="1"/>
</dbReference>
<dbReference type="Gene3D" id="3.20.20.210">
    <property type="match status" value="2"/>
</dbReference>
<dbReference type="HAMAP" id="MF_00172">
    <property type="entry name" value="Meth_synth"/>
    <property type="match status" value="1"/>
</dbReference>
<dbReference type="InterPro" id="IPR013215">
    <property type="entry name" value="Cbl-indep_Met_Synth_N"/>
</dbReference>
<dbReference type="InterPro" id="IPR006276">
    <property type="entry name" value="Cobalamin-indep_Met_synthase"/>
</dbReference>
<dbReference type="InterPro" id="IPR002629">
    <property type="entry name" value="Met_Synth_C/arc"/>
</dbReference>
<dbReference type="InterPro" id="IPR038071">
    <property type="entry name" value="UROD/MetE-like_sf"/>
</dbReference>
<dbReference type="NCBIfam" id="TIGR01371">
    <property type="entry name" value="met_syn_B12ind"/>
    <property type="match status" value="1"/>
</dbReference>
<dbReference type="NCBIfam" id="NF003556">
    <property type="entry name" value="PRK05222.1"/>
    <property type="match status" value="1"/>
</dbReference>
<dbReference type="PANTHER" id="PTHR30519">
    <property type="entry name" value="5-METHYLTETRAHYDROPTEROYLTRIGLUTAMATE--HOMOCYSTEINE METHYLTRANSFERASE"/>
    <property type="match status" value="1"/>
</dbReference>
<dbReference type="Pfam" id="PF08267">
    <property type="entry name" value="Meth_synt_1"/>
    <property type="match status" value="1"/>
</dbReference>
<dbReference type="Pfam" id="PF01717">
    <property type="entry name" value="Meth_synt_2"/>
    <property type="match status" value="1"/>
</dbReference>
<dbReference type="PIRSF" id="PIRSF000382">
    <property type="entry name" value="MeTrfase_B12_ind"/>
    <property type="match status" value="1"/>
</dbReference>
<dbReference type="SUPFAM" id="SSF51726">
    <property type="entry name" value="UROD/MetE-like"/>
    <property type="match status" value="2"/>
</dbReference>
<gene>
    <name evidence="1" type="primary">metE</name>
    <name type="ordered locus">mll6123</name>
</gene>
<accession>Q98A73</accession>
<reference key="1">
    <citation type="journal article" date="2000" name="DNA Res.">
        <title>Complete genome structure of the nitrogen-fixing symbiotic bacterium Mesorhizobium loti.</title>
        <authorList>
            <person name="Kaneko T."/>
            <person name="Nakamura Y."/>
            <person name="Sato S."/>
            <person name="Asamizu E."/>
            <person name="Kato T."/>
            <person name="Sasamoto S."/>
            <person name="Watanabe A."/>
            <person name="Idesawa K."/>
            <person name="Ishikawa A."/>
            <person name="Kawashima K."/>
            <person name="Kimura T."/>
            <person name="Kishida Y."/>
            <person name="Kiyokawa C."/>
            <person name="Kohara M."/>
            <person name="Matsumoto M."/>
            <person name="Matsuno A."/>
            <person name="Mochizuki Y."/>
            <person name="Nakayama S."/>
            <person name="Nakazaki N."/>
            <person name="Shimpo S."/>
            <person name="Sugimoto M."/>
            <person name="Takeuchi C."/>
            <person name="Yamada M."/>
            <person name="Tabata S."/>
        </authorList>
    </citation>
    <scope>NUCLEOTIDE SEQUENCE [LARGE SCALE GENOMIC DNA]</scope>
    <source>
        <strain>LMG 29417 / CECT 9101 / MAFF 303099</strain>
    </source>
</reference>
<comment type="function">
    <text evidence="1">Catalyzes the transfer of a methyl group from 5-methyltetrahydrofolate to homocysteine resulting in methionine formation.</text>
</comment>
<comment type="catalytic activity">
    <reaction evidence="1">
        <text>5-methyltetrahydropteroyltri-L-glutamate + L-homocysteine = tetrahydropteroyltri-L-glutamate + L-methionine</text>
        <dbReference type="Rhea" id="RHEA:21196"/>
        <dbReference type="ChEBI" id="CHEBI:57844"/>
        <dbReference type="ChEBI" id="CHEBI:58140"/>
        <dbReference type="ChEBI" id="CHEBI:58199"/>
        <dbReference type="ChEBI" id="CHEBI:58207"/>
        <dbReference type="EC" id="2.1.1.14"/>
    </reaction>
</comment>
<comment type="cofactor">
    <cofactor evidence="1">
        <name>Zn(2+)</name>
        <dbReference type="ChEBI" id="CHEBI:29105"/>
    </cofactor>
    <text evidence="1">Binds 1 zinc ion per subunit.</text>
</comment>
<comment type="pathway">
    <text evidence="1">Amino-acid biosynthesis; L-methionine biosynthesis via de novo pathway; L-methionine from L-homocysteine (MetE route): step 1/1.</text>
</comment>
<comment type="similarity">
    <text evidence="1">Belongs to the vitamin-B12 independent methionine synthase family.</text>
</comment>
<evidence type="ECO:0000255" key="1">
    <source>
        <dbReference type="HAMAP-Rule" id="MF_00172"/>
    </source>
</evidence>
<feature type="chain" id="PRO_0000098652" description="5-methyltetrahydropteroyltriglutamate--homocysteine methyltransferase">
    <location>
        <begin position="1"/>
        <end position="776"/>
    </location>
</feature>
<feature type="active site" description="Proton donor" evidence="1">
    <location>
        <position position="713"/>
    </location>
</feature>
<feature type="binding site" evidence="1">
    <location>
        <begin position="13"/>
        <end position="16"/>
    </location>
    <ligand>
        <name>5-methyltetrahydropteroyltri-L-glutamate</name>
        <dbReference type="ChEBI" id="CHEBI:58207"/>
    </ligand>
</feature>
<feature type="binding site" evidence="1">
    <location>
        <position position="127"/>
    </location>
    <ligand>
        <name>5-methyltetrahydropteroyltri-L-glutamate</name>
        <dbReference type="ChEBI" id="CHEBI:58207"/>
    </ligand>
</feature>
<feature type="binding site" evidence="1">
    <location>
        <begin position="450"/>
        <end position="452"/>
    </location>
    <ligand>
        <name>L-homocysteine</name>
        <dbReference type="ChEBI" id="CHEBI:58199"/>
    </ligand>
</feature>
<feature type="binding site" evidence="1">
    <location>
        <begin position="450"/>
        <end position="452"/>
    </location>
    <ligand>
        <name>L-methionine</name>
        <dbReference type="ChEBI" id="CHEBI:57844"/>
    </ligand>
</feature>
<feature type="binding site" evidence="1">
    <location>
        <position position="503"/>
    </location>
    <ligand>
        <name>L-homocysteine</name>
        <dbReference type="ChEBI" id="CHEBI:58199"/>
    </ligand>
</feature>
<feature type="binding site" evidence="1">
    <location>
        <position position="503"/>
    </location>
    <ligand>
        <name>L-methionine</name>
        <dbReference type="ChEBI" id="CHEBI:57844"/>
    </ligand>
</feature>
<feature type="binding site" evidence="1">
    <location>
        <position position="580"/>
    </location>
    <ligand>
        <name>5-methyltetrahydropteroyltri-L-glutamate</name>
        <dbReference type="ChEBI" id="CHEBI:58207"/>
    </ligand>
</feature>
<feature type="binding site" evidence="1">
    <location>
        <position position="618"/>
    </location>
    <ligand>
        <name>L-homocysteine</name>
        <dbReference type="ChEBI" id="CHEBI:58199"/>
    </ligand>
</feature>
<feature type="binding site" evidence="1">
    <location>
        <position position="618"/>
    </location>
    <ligand>
        <name>L-methionine</name>
        <dbReference type="ChEBI" id="CHEBI:57844"/>
    </ligand>
</feature>
<feature type="binding site" evidence="1">
    <location>
        <position position="624"/>
    </location>
    <ligand>
        <name>5-methyltetrahydropteroyltri-L-glutamate</name>
        <dbReference type="ChEBI" id="CHEBI:58207"/>
    </ligand>
</feature>
<feature type="binding site" evidence="1">
    <location>
        <position position="660"/>
    </location>
    <ligand>
        <name>Zn(2+)</name>
        <dbReference type="ChEBI" id="CHEBI:29105"/>
        <note>catalytic</note>
    </ligand>
</feature>
<feature type="binding site" evidence="1">
    <location>
        <position position="662"/>
    </location>
    <ligand>
        <name>Zn(2+)</name>
        <dbReference type="ChEBI" id="CHEBI:29105"/>
        <note>catalytic</note>
    </ligand>
</feature>
<feature type="binding site" evidence="1">
    <location>
        <position position="684"/>
    </location>
    <ligand>
        <name>Zn(2+)</name>
        <dbReference type="ChEBI" id="CHEBI:29105"/>
        <note>catalytic</note>
    </ligand>
</feature>
<feature type="binding site" evidence="1">
    <location>
        <position position="745"/>
    </location>
    <ligand>
        <name>Zn(2+)</name>
        <dbReference type="ChEBI" id="CHEBI:29105"/>
        <note>catalytic</note>
    </ligand>
</feature>